<gene>
    <name type="primary">TIP2-2</name>
    <name type="ordered locus">Os06g0336200</name>
    <name type="ordered locus">LOC_Os06g22960</name>
    <name type="ORF">OsJ_020360</name>
    <name type="ORF">OSJNBa0012F14.45-1</name>
    <name type="ORF">P0427E01.5-1</name>
</gene>
<feature type="chain" id="PRO_0000064024" description="Probable aquaporin TIP2-2">
    <location>
        <begin position="1"/>
        <end position="248"/>
    </location>
</feature>
<feature type="transmembrane region" description="Helical; Name=1" evidence="2">
    <location>
        <begin position="21"/>
        <end position="41"/>
    </location>
</feature>
<feature type="transmembrane region" description="Helical; Name=2" evidence="2">
    <location>
        <begin position="55"/>
        <end position="75"/>
    </location>
</feature>
<feature type="transmembrane region" description="Helical; Name=3" evidence="2">
    <location>
        <begin position="87"/>
        <end position="109"/>
    </location>
</feature>
<feature type="transmembrane region" description="Helical; Name=4" evidence="2">
    <location>
        <begin position="133"/>
        <end position="153"/>
    </location>
</feature>
<feature type="transmembrane region" description="Helical; Name=5" evidence="2">
    <location>
        <begin position="168"/>
        <end position="188"/>
    </location>
</feature>
<feature type="transmembrane region" description="Helical; Name=6" evidence="2">
    <location>
        <begin position="210"/>
        <end position="230"/>
    </location>
</feature>
<feature type="short sequence motif" description="NPA 1">
    <location>
        <begin position="84"/>
        <end position="86"/>
    </location>
</feature>
<feature type="short sequence motif" description="NPA 2">
    <location>
        <begin position="196"/>
        <end position="198"/>
    </location>
</feature>
<accession>Q5Z6F0</accession>
<accession>B7EMA5</accession>
<accession>Q0DCF3</accession>
<name>TIP22_ORYSJ</name>
<proteinExistence type="evidence at transcript level"/>
<protein>
    <recommendedName>
        <fullName>Probable aquaporin TIP2-2</fullName>
    </recommendedName>
    <alternativeName>
        <fullName>Tonoplast intrinsic protein 2-2</fullName>
        <shortName>OsTIP2;2</shortName>
    </alternativeName>
</protein>
<keyword id="KW-0472">Membrane</keyword>
<keyword id="KW-1185">Reference proteome</keyword>
<keyword id="KW-0677">Repeat</keyword>
<keyword id="KW-0812">Transmembrane</keyword>
<keyword id="KW-1133">Transmembrane helix</keyword>
<keyword id="KW-0813">Transport</keyword>
<keyword id="KW-0926">Vacuole</keyword>
<dbReference type="EMBL" id="AP004784">
    <property type="protein sequence ID" value="BAD61899.1"/>
    <property type="molecule type" value="Genomic_DNA"/>
</dbReference>
<dbReference type="EMBL" id="AP005449">
    <property type="protein sequence ID" value="BAD61902.1"/>
    <property type="molecule type" value="Genomic_DNA"/>
</dbReference>
<dbReference type="EMBL" id="AP008212">
    <property type="protein sequence ID" value="BAF19470.2"/>
    <property type="status" value="ALT_SEQ"/>
    <property type="molecule type" value="Genomic_DNA"/>
</dbReference>
<dbReference type="EMBL" id="AP014962">
    <property type="protein sequence ID" value="BAS97594.1"/>
    <property type="molecule type" value="Genomic_DNA"/>
</dbReference>
<dbReference type="EMBL" id="CM000143">
    <property type="protein sequence ID" value="EAZ36877.1"/>
    <property type="molecule type" value="Genomic_DNA"/>
</dbReference>
<dbReference type="EMBL" id="AK073531">
    <property type="protein sequence ID" value="BAG93502.1"/>
    <property type="molecule type" value="mRNA"/>
</dbReference>
<dbReference type="EMBL" id="AK099015">
    <property type="protein sequence ID" value="BAG93869.1"/>
    <property type="molecule type" value="mRNA"/>
</dbReference>
<dbReference type="EMBL" id="AK099141">
    <property type="protein sequence ID" value="BAG93947.1"/>
    <property type="molecule type" value="mRNA"/>
</dbReference>
<dbReference type="EMBL" id="AK099616">
    <property type="protein sequence ID" value="BAG94223.1"/>
    <property type="molecule type" value="mRNA"/>
</dbReference>
<dbReference type="EMBL" id="AK104270">
    <property type="protein sequence ID" value="BAG96560.1"/>
    <property type="molecule type" value="mRNA"/>
</dbReference>
<dbReference type="EMBL" id="AK104377">
    <property type="protein sequence ID" value="BAG96632.1"/>
    <property type="molecule type" value="mRNA"/>
</dbReference>
<dbReference type="EMBL" id="AK104464">
    <property type="protein sequence ID" value="BAG96705.1"/>
    <property type="molecule type" value="mRNA"/>
</dbReference>
<dbReference type="RefSeq" id="XP_015643913.1">
    <property type="nucleotide sequence ID" value="XM_015788427.1"/>
</dbReference>
<dbReference type="SMR" id="Q5Z6F0"/>
<dbReference type="FunCoup" id="Q5Z6F0">
    <property type="interactions" value="451"/>
</dbReference>
<dbReference type="STRING" id="39947.Q5Z6F0"/>
<dbReference type="PaxDb" id="39947-Q5Z6F0"/>
<dbReference type="EnsemblPlants" id="Os06t0336200-01">
    <property type="protein sequence ID" value="Os06t0336200-01"/>
    <property type="gene ID" value="Os06g0336200"/>
</dbReference>
<dbReference type="Gramene" id="Os06t0336200-01">
    <property type="protein sequence ID" value="Os06t0336200-01"/>
    <property type="gene ID" value="Os06g0336200"/>
</dbReference>
<dbReference type="KEGG" id="dosa:Os06g0336200"/>
<dbReference type="eggNOG" id="KOG0223">
    <property type="taxonomic scope" value="Eukaryota"/>
</dbReference>
<dbReference type="HOGENOM" id="CLU_020019_3_4_1"/>
<dbReference type="InParanoid" id="Q5Z6F0"/>
<dbReference type="OMA" id="FKKKMFW"/>
<dbReference type="OrthoDB" id="3222at2759"/>
<dbReference type="Proteomes" id="UP000000763">
    <property type="component" value="Chromosome 6"/>
</dbReference>
<dbReference type="Proteomes" id="UP000007752">
    <property type="component" value="Chromosome 6"/>
</dbReference>
<dbReference type="Proteomes" id="UP000059680">
    <property type="component" value="Chromosome 6"/>
</dbReference>
<dbReference type="ExpressionAtlas" id="Q5Z6F0">
    <property type="expression patterns" value="baseline and differential"/>
</dbReference>
<dbReference type="GO" id="GO:0016020">
    <property type="term" value="C:membrane"/>
    <property type="evidence" value="ECO:0000318"/>
    <property type="project" value="GO_Central"/>
</dbReference>
<dbReference type="GO" id="GO:0005774">
    <property type="term" value="C:vacuolar membrane"/>
    <property type="evidence" value="ECO:0007669"/>
    <property type="project" value="UniProtKB-SubCell"/>
</dbReference>
<dbReference type="GO" id="GO:0015250">
    <property type="term" value="F:water channel activity"/>
    <property type="evidence" value="ECO:0000318"/>
    <property type="project" value="GO_Central"/>
</dbReference>
<dbReference type="GO" id="GO:0019755">
    <property type="term" value="P:one-carbon compound transport"/>
    <property type="evidence" value="ECO:0007669"/>
    <property type="project" value="UniProtKB-ARBA"/>
</dbReference>
<dbReference type="GO" id="GO:0006833">
    <property type="term" value="P:water transport"/>
    <property type="evidence" value="ECO:0000318"/>
    <property type="project" value="GO_Central"/>
</dbReference>
<dbReference type="CDD" id="cd00333">
    <property type="entry name" value="MIP"/>
    <property type="match status" value="1"/>
</dbReference>
<dbReference type="FunFam" id="1.20.1080.10:FF:000002">
    <property type="entry name" value="Probable aquaporin TIP1-1"/>
    <property type="match status" value="1"/>
</dbReference>
<dbReference type="Gene3D" id="1.20.1080.10">
    <property type="entry name" value="Glycerol uptake facilitator protein"/>
    <property type="match status" value="1"/>
</dbReference>
<dbReference type="InterPro" id="IPR023271">
    <property type="entry name" value="Aquaporin-like"/>
</dbReference>
<dbReference type="InterPro" id="IPR034294">
    <property type="entry name" value="Aquaporin_transptr"/>
</dbReference>
<dbReference type="InterPro" id="IPR000425">
    <property type="entry name" value="MIP"/>
</dbReference>
<dbReference type="InterPro" id="IPR022357">
    <property type="entry name" value="MIP_CS"/>
</dbReference>
<dbReference type="NCBIfam" id="TIGR00861">
    <property type="entry name" value="MIP"/>
    <property type="match status" value="1"/>
</dbReference>
<dbReference type="PANTHER" id="PTHR45665">
    <property type="entry name" value="AQUAPORIN-8"/>
    <property type="match status" value="1"/>
</dbReference>
<dbReference type="PANTHER" id="PTHR45665:SF9">
    <property type="entry name" value="AQUAPORIN-8"/>
    <property type="match status" value="1"/>
</dbReference>
<dbReference type="Pfam" id="PF00230">
    <property type="entry name" value="MIP"/>
    <property type="match status" value="1"/>
</dbReference>
<dbReference type="PRINTS" id="PR00783">
    <property type="entry name" value="MINTRINSICP"/>
</dbReference>
<dbReference type="SUPFAM" id="SSF81338">
    <property type="entry name" value="Aquaporin-like"/>
    <property type="match status" value="1"/>
</dbReference>
<dbReference type="PROSITE" id="PS00221">
    <property type="entry name" value="MIP"/>
    <property type="match status" value="1"/>
</dbReference>
<sequence>MSGNIAFGRFDDSFSAASLKAYVAEFISTLVFVFAGVGSAIAYTKLTGGAPLDPAGLVAVAVCHGFGLFVAVAIGANISGGHVNPAVTFGLALGGQITILTGVFYWIAQLLGAIVGAVLVQFCTGVATPTHGLSGVGAFEGVVMEIIVTFGLVYTVYATAADPKKGSLGTIAPIAIGFIVGANILVAGPFSGGSMNPARSFGPAVASGDYTNIWIYWVGPLVGGGLAGLVYRYVYMCGDHAPVASSEF</sequence>
<reference key="1">
    <citation type="journal article" date="2005" name="Nature">
        <title>The map-based sequence of the rice genome.</title>
        <authorList>
            <consortium name="International rice genome sequencing project (IRGSP)"/>
        </authorList>
    </citation>
    <scope>NUCLEOTIDE SEQUENCE [LARGE SCALE GENOMIC DNA]</scope>
    <source>
        <strain>cv. Nipponbare</strain>
    </source>
</reference>
<reference key="2">
    <citation type="journal article" date="2008" name="Nucleic Acids Res.">
        <title>The rice annotation project database (RAP-DB): 2008 update.</title>
        <authorList>
            <consortium name="The rice annotation project (RAP)"/>
        </authorList>
    </citation>
    <scope>GENOME REANNOTATION</scope>
    <source>
        <strain>cv. Nipponbare</strain>
    </source>
</reference>
<reference key="3">
    <citation type="journal article" date="2013" name="Rice">
        <title>Improvement of the Oryza sativa Nipponbare reference genome using next generation sequence and optical map data.</title>
        <authorList>
            <person name="Kawahara Y."/>
            <person name="de la Bastide M."/>
            <person name="Hamilton J.P."/>
            <person name="Kanamori H."/>
            <person name="McCombie W.R."/>
            <person name="Ouyang S."/>
            <person name="Schwartz D.C."/>
            <person name="Tanaka T."/>
            <person name="Wu J."/>
            <person name="Zhou S."/>
            <person name="Childs K.L."/>
            <person name="Davidson R.M."/>
            <person name="Lin H."/>
            <person name="Quesada-Ocampo L."/>
            <person name="Vaillancourt B."/>
            <person name="Sakai H."/>
            <person name="Lee S.S."/>
            <person name="Kim J."/>
            <person name="Numa H."/>
            <person name="Itoh T."/>
            <person name="Buell C.R."/>
            <person name="Matsumoto T."/>
        </authorList>
    </citation>
    <scope>GENOME REANNOTATION</scope>
    <source>
        <strain>cv. Nipponbare</strain>
    </source>
</reference>
<reference key="4">
    <citation type="journal article" date="2005" name="PLoS Biol.">
        <title>The genomes of Oryza sativa: a history of duplications.</title>
        <authorList>
            <person name="Yu J."/>
            <person name="Wang J."/>
            <person name="Lin W."/>
            <person name="Li S."/>
            <person name="Li H."/>
            <person name="Zhou J."/>
            <person name="Ni P."/>
            <person name="Dong W."/>
            <person name="Hu S."/>
            <person name="Zeng C."/>
            <person name="Zhang J."/>
            <person name="Zhang Y."/>
            <person name="Li R."/>
            <person name="Xu Z."/>
            <person name="Li S."/>
            <person name="Li X."/>
            <person name="Zheng H."/>
            <person name="Cong L."/>
            <person name="Lin L."/>
            <person name="Yin J."/>
            <person name="Geng J."/>
            <person name="Li G."/>
            <person name="Shi J."/>
            <person name="Liu J."/>
            <person name="Lv H."/>
            <person name="Li J."/>
            <person name="Wang J."/>
            <person name="Deng Y."/>
            <person name="Ran L."/>
            <person name="Shi X."/>
            <person name="Wang X."/>
            <person name="Wu Q."/>
            <person name="Li C."/>
            <person name="Ren X."/>
            <person name="Wang J."/>
            <person name="Wang X."/>
            <person name="Li D."/>
            <person name="Liu D."/>
            <person name="Zhang X."/>
            <person name="Ji Z."/>
            <person name="Zhao W."/>
            <person name="Sun Y."/>
            <person name="Zhang Z."/>
            <person name="Bao J."/>
            <person name="Han Y."/>
            <person name="Dong L."/>
            <person name="Ji J."/>
            <person name="Chen P."/>
            <person name="Wu S."/>
            <person name="Liu J."/>
            <person name="Xiao Y."/>
            <person name="Bu D."/>
            <person name="Tan J."/>
            <person name="Yang L."/>
            <person name="Ye C."/>
            <person name="Zhang J."/>
            <person name="Xu J."/>
            <person name="Zhou Y."/>
            <person name="Yu Y."/>
            <person name="Zhang B."/>
            <person name="Zhuang S."/>
            <person name="Wei H."/>
            <person name="Liu B."/>
            <person name="Lei M."/>
            <person name="Yu H."/>
            <person name="Li Y."/>
            <person name="Xu H."/>
            <person name="Wei S."/>
            <person name="He X."/>
            <person name="Fang L."/>
            <person name="Zhang Z."/>
            <person name="Zhang Y."/>
            <person name="Huang X."/>
            <person name="Su Z."/>
            <person name="Tong W."/>
            <person name="Li J."/>
            <person name="Tong Z."/>
            <person name="Li S."/>
            <person name="Ye J."/>
            <person name="Wang L."/>
            <person name="Fang L."/>
            <person name="Lei T."/>
            <person name="Chen C.-S."/>
            <person name="Chen H.-C."/>
            <person name="Xu Z."/>
            <person name="Li H."/>
            <person name="Huang H."/>
            <person name="Zhang F."/>
            <person name="Xu H."/>
            <person name="Li N."/>
            <person name="Zhao C."/>
            <person name="Li S."/>
            <person name="Dong L."/>
            <person name="Huang Y."/>
            <person name="Li L."/>
            <person name="Xi Y."/>
            <person name="Qi Q."/>
            <person name="Li W."/>
            <person name="Zhang B."/>
            <person name="Hu W."/>
            <person name="Zhang Y."/>
            <person name="Tian X."/>
            <person name="Jiao Y."/>
            <person name="Liang X."/>
            <person name="Jin J."/>
            <person name="Gao L."/>
            <person name="Zheng W."/>
            <person name="Hao B."/>
            <person name="Liu S.-M."/>
            <person name="Wang W."/>
            <person name="Yuan L."/>
            <person name="Cao M."/>
            <person name="McDermott J."/>
            <person name="Samudrala R."/>
            <person name="Wang J."/>
            <person name="Wong G.K.-S."/>
            <person name="Yang H."/>
        </authorList>
    </citation>
    <scope>NUCLEOTIDE SEQUENCE [LARGE SCALE GENOMIC DNA]</scope>
    <source>
        <strain>cv. Nipponbare</strain>
    </source>
</reference>
<reference key="5">
    <citation type="journal article" date="2003" name="Science">
        <title>Collection, mapping, and annotation of over 28,000 cDNA clones from japonica rice.</title>
        <authorList>
            <consortium name="The rice full-length cDNA consortium"/>
        </authorList>
    </citation>
    <scope>NUCLEOTIDE SEQUENCE [LARGE SCALE MRNA]</scope>
    <source>
        <strain>cv. Nipponbare</strain>
    </source>
</reference>
<reference key="6">
    <citation type="journal article" date="2005" name="Plant Cell Physiol.">
        <title>Identification of 33 rice aquaporin genes and analysis of their expression and function.</title>
        <authorList>
            <person name="Sakurai J."/>
            <person name="Ishikawa F."/>
            <person name="Yamaguchi T."/>
            <person name="Uemura M."/>
            <person name="Maeshima M."/>
        </authorList>
    </citation>
    <scope>NOMENCLATURE</scope>
    <scope>TISSUE SPECIFICITY</scope>
    <scope>INDUCTION</scope>
</reference>
<comment type="function">
    <text evidence="1">Aquaporins facilitate the transport of water and small neutral solutes across cell membranes. May be involved in transport from the vacuolar compartment to the cytoplasm (By similarity).</text>
</comment>
<comment type="subcellular location">
    <subcellularLocation>
        <location evidence="1">Vacuole membrane</location>
        <topology evidence="1">Multi-pass membrane protein</topology>
    </subcellularLocation>
    <text>Tonoplast.</text>
</comment>
<comment type="tissue specificity">
    <text evidence="3">Expressed in roots and leaves.</text>
</comment>
<comment type="induction">
    <text evidence="3">Down-regulated by chilling.</text>
</comment>
<comment type="domain">
    <text>Aquaporins contain two tandem repeats each containing three membrane-spanning domains and a pore-forming loop with the signature motif Asn-Pro-Ala (NPA).</text>
</comment>
<comment type="similarity">
    <text evidence="4">Belongs to the MIP/aquaporin (TC 1.A.8) family. TIP (TC 1.A.8.10) subfamily.</text>
</comment>
<comment type="sequence caution" evidence="4">
    <conflict type="erroneous gene model prediction">
        <sequence resource="EMBL-CDS" id="BAF19470"/>
    </conflict>
</comment>
<organism>
    <name type="scientific">Oryza sativa subsp. japonica</name>
    <name type="common">Rice</name>
    <dbReference type="NCBI Taxonomy" id="39947"/>
    <lineage>
        <taxon>Eukaryota</taxon>
        <taxon>Viridiplantae</taxon>
        <taxon>Streptophyta</taxon>
        <taxon>Embryophyta</taxon>
        <taxon>Tracheophyta</taxon>
        <taxon>Spermatophyta</taxon>
        <taxon>Magnoliopsida</taxon>
        <taxon>Liliopsida</taxon>
        <taxon>Poales</taxon>
        <taxon>Poaceae</taxon>
        <taxon>BOP clade</taxon>
        <taxon>Oryzoideae</taxon>
        <taxon>Oryzeae</taxon>
        <taxon>Oryzinae</taxon>
        <taxon>Oryza</taxon>
        <taxon>Oryza sativa</taxon>
    </lineage>
</organism>
<evidence type="ECO:0000250" key="1"/>
<evidence type="ECO:0000255" key="2"/>
<evidence type="ECO:0000269" key="3">
    <source>
    </source>
</evidence>
<evidence type="ECO:0000305" key="4"/>